<protein>
    <recommendedName>
        <fullName evidence="1">Serine--tRNA ligase</fullName>
        <ecNumber evidence="1">6.1.1.11</ecNumber>
    </recommendedName>
    <alternativeName>
        <fullName evidence="1">Seryl-tRNA synthetase</fullName>
        <shortName evidence="1">SerRS</shortName>
    </alternativeName>
    <alternativeName>
        <fullName evidence="1">Seryl-tRNA(Ser/Sec) synthetase</fullName>
    </alternativeName>
</protein>
<gene>
    <name evidence="1" type="primary">serS</name>
    <name type="ordered locus">RMA_1233</name>
</gene>
<comment type="function">
    <text evidence="1">Catalyzes the attachment of serine to tRNA(Ser). Is also able to aminoacylate tRNA(Sec) with serine, to form the misacylated tRNA L-seryl-tRNA(Sec), which will be further converted into selenocysteinyl-tRNA(Sec).</text>
</comment>
<comment type="catalytic activity">
    <reaction evidence="1">
        <text>tRNA(Ser) + L-serine + ATP = L-seryl-tRNA(Ser) + AMP + diphosphate + H(+)</text>
        <dbReference type="Rhea" id="RHEA:12292"/>
        <dbReference type="Rhea" id="RHEA-COMP:9669"/>
        <dbReference type="Rhea" id="RHEA-COMP:9703"/>
        <dbReference type="ChEBI" id="CHEBI:15378"/>
        <dbReference type="ChEBI" id="CHEBI:30616"/>
        <dbReference type="ChEBI" id="CHEBI:33019"/>
        <dbReference type="ChEBI" id="CHEBI:33384"/>
        <dbReference type="ChEBI" id="CHEBI:78442"/>
        <dbReference type="ChEBI" id="CHEBI:78533"/>
        <dbReference type="ChEBI" id="CHEBI:456215"/>
        <dbReference type="EC" id="6.1.1.11"/>
    </reaction>
</comment>
<comment type="catalytic activity">
    <reaction evidence="1">
        <text>tRNA(Sec) + L-serine + ATP = L-seryl-tRNA(Sec) + AMP + diphosphate + H(+)</text>
        <dbReference type="Rhea" id="RHEA:42580"/>
        <dbReference type="Rhea" id="RHEA-COMP:9742"/>
        <dbReference type="Rhea" id="RHEA-COMP:10128"/>
        <dbReference type="ChEBI" id="CHEBI:15378"/>
        <dbReference type="ChEBI" id="CHEBI:30616"/>
        <dbReference type="ChEBI" id="CHEBI:33019"/>
        <dbReference type="ChEBI" id="CHEBI:33384"/>
        <dbReference type="ChEBI" id="CHEBI:78442"/>
        <dbReference type="ChEBI" id="CHEBI:78533"/>
        <dbReference type="ChEBI" id="CHEBI:456215"/>
        <dbReference type="EC" id="6.1.1.11"/>
    </reaction>
</comment>
<comment type="pathway">
    <text evidence="1">Aminoacyl-tRNA biosynthesis; selenocysteinyl-tRNA(Sec) biosynthesis; L-seryl-tRNA(Sec) from L-serine and tRNA(Sec): step 1/1.</text>
</comment>
<comment type="subunit">
    <text evidence="1">Homodimer. The tRNA molecule binds across the dimer.</text>
</comment>
<comment type="subcellular location">
    <subcellularLocation>
        <location evidence="1">Cytoplasm</location>
    </subcellularLocation>
</comment>
<comment type="domain">
    <text evidence="1">Consists of two distinct domains, a catalytic core and a N-terminal extension that is involved in tRNA binding.</text>
</comment>
<comment type="similarity">
    <text evidence="1">Belongs to the class-II aminoacyl-tRNA synthetase family. Type-1 seryl-tRNA synthetase subfamily.</text>
</comment>
<name>SYS_RICM5</name>
<reference key="1">
    <citation type="journal article" date="2007" name="Genome Res.">
        <title>Lateral gene transfer between obligate intracellular bacteria: evidence from the Rickettsia massiliae genome.</title>
        <authorList>
            <person name="Blanc G."/>
            <person name="Ogata H."/>
            <person name="Robert C."/>
            <person name="Audic S."/>
            <person name="Claverie J.-M."/>
            <person name="Raoult D."/>
        </authorList>
    </citation>
    <scope>NUCLEOTIDE SEQUENCE [LARGE SCALE GENOMIC DNA]</scope>
    <source>
        <strain>Mtu5</strain>
    </source>
</reference>
<dbReference type="EC" id="6.1.1.11" evidence="1"/>
<dbReference type="EMBL" id="CP000683">
    <property type="protein sequence ID" value="ABV85209.1"/>
    <property type="molecule type" value="Genomic_DNA"/>
</dbReference>
<dbReference type="RefSeq" id="WP_012153171.1">
    <property type="nucleotide sequence ID" value="NC_009900.1"/>
</dbReference>
<dbReference type="SMR" id="A8F2S3"/>
<dbReference type="KEGG" id="rms:RMA_1233"/>
<dbReference type="HOGENOM" id="CLU_023797_1_1_5"/>
<dbReference type="UniPathway" id="UPA00906">
    <property type="reaction ID" value="UER00895"/>
</dbReference>
<dbReference type="Proteomes" id="UP000001311">
    <property type="component" value="Chromosome"/>
</dbReference>
<dbReference type="GO" id="GO:0005737">
    <property type="term" value="C:cytoplasm"/>
    <property type="evidence" value="ECO:0007669"/>
    <property type="project" value="UniProtKB-SubCell"/>
</dbReference>
<dbReference type="GO" id="GO:0005524">
    <property type="term" value="F:ATP binding"/>
    <property type="evidence" value="ECO:0007669"/>
    <property type="project" value="UniProtKB-UniRule"/>
</dbReference>
<dbReference type="GO" id="GO:0004828">
    <property type="term" value="F:serine-tRNA ligase activity"/>
    <property type="evidence" value="ECO:0007669"/>
    <property type="project" value="UniProtKB-UniRule"/>
</dbReference>
<dbReference type="GO" id="GO:0016260">
    <property type="term" value="P:selenocysteine biosynthetic process"/>
    <property type="evidence" value="ECO:0007669"/>
    <property type="project" value="UniProtKB-UniRule"/>
</dbReference>
<dbReference type="GO" id="GO:0006434">
    <property type="term" value="P:seryl-tRNA aminoacylation"/>
    <property type="evidence" value="ECO:0007669"/>
    <property type="project" value="UniProtKB-UniRule"/>
</dbReference>
<dbReference type="CDD" id="cd00770">
    <property type="entry name" value="SerRS_core"/>
    <property type="match status" value="1"/>
</dbReference>
<dbReference type="Gene3D" id="3.30.930.10">
    <property type="entry name" value="Bira Bifunctional Protein, Domain 2"/>
    <property type="match status" value="1"/>
</dbReference>
<dbReference type="Gene3D" id="1.10.287.40">
    <property type="entry name" value="Serine-tRNA synthetase, tRNA binding domain"/>
    <property type="match status" value="1"/>
</dbReference>
<dbReference type="HAMAP" id="MF_00176">
    <property type="entry name" value="Ser_tRNA_synth_type1"/>
    <property type="match status" value="1"/>
</dbReference>
<dbReference type="InterPro" id="IPR002314">
    <property type="entry name" value="aa-tRNA-synt_IIb"/>
</dbReference>
<dbReference type="InterPro" id="IPR006195">
    <property type="entry name" value="aa-tRNA-synth_II"/>
</dbReference>
<dbReference type="InterPro" id="IPR045864">
    <property type="entry name" value="aa-tRNA-synth_II/BPL/LPL"/>
</dbReference>
<dbReference type="InterPro" id="IPR002317">
    <property type="entry name" value="Ser-tRNA-ligase_type_1"/>
</dbReference>
<dbReference type="InterPro" id="IPR015866">
    <property type="entry name" value="Ser-tRNA-synth_1_N"/>
</dbReference>
<dbReference type="InterPro" id="IPR042103">
    <property type="entry name" value="SerRS_1_N_sf"/>
</dbReference>
<dbReference type="InterPro" id="IPR033729">
    <property type="entry name" value="SerRS_core"/>
</dbReference>
<dbReference type="InterPro" id="IPR010978">
    <property type="entry name" value="tRNA-bd_arm"/>
</dbReference>
<dbReference type="NCBIfam" id="TIGR00414">
    <property type="entry name" value="serS"/>
    <property type="match status" value="1"/>
</dbReference>
<dbReference type="PANTHER" id="PTHR43697:SF1">
    <property type="entry name" value="SERINE--TRNA LIGASE"/>
    <property type="match status" value="1"/>
</dbReference>
<dbReference type="PANTHER" id="PTHR43697">
    <property type="entry name" value="SERYL-TRNA SYNTHETASE"/>
    <property type="match status" value="1"/>
</dbReference>
<dbReference type="Pfam" id="PF02403">
    <property type="entry name" value="Seryl_tRNA_N"/>
    <property type="match status" value="1"/>
</dbReference>
<dbReference type="Pfam" id="PF00587">
    <property type="entry name" value="tRNA-synt_2b"/>
    <property type="match status" value="1"/>
</dbReference>
<dbReference type="PIRSF" id="PIRSF001529">
    <property type="entry name" value="Ser-tRNA-synth_IIa"/>
    <property type="match status" value="1"/>
</dbReference>
<dbReference type="PRINTS" id="PR00981">
    <property type="entry name" value="TRNASYNTHSER"/>
</dbReference>
<dbReference type="SUPFAM" id="SSF55681">
    <property type="entry name" value="Class II aaRS and biotin synthetases"/>
    <property type="match status" value="1"/>
</dbReference>
<dbReference type="SUPFAM" id="SSF46589">
    <property type="entry name" value="tRNA-binding arm"/>
    <property type="match status" value="1"/>
</dbReference>
<dbReference type="PROSITE" id="PS50862">
    <property type="entry name" value="AA_TRNA_LIGASE_II"/>
    <property type="match status" value="1"/>
</dbReference>
<sequence>MLNIKWIRENQKLFDEKLSQRFIEPMSSKIAMLDREKRKIMSLIQEFQHARKVKSKILGNMASKSGEEFEGLQRDVKHINEKLEALEQDLNNNNELNELLNMFPNIPDEEVPYGMDESMNKLVRTYGETNPNALNKQHFELGIKLNLMDFEQTAKISGTRFVTLKGDLAKLERALINFMIDVHTKELDFFEISPPVLVRDNAMYNAGQLPKFAEESFATTNGYRLIPTAEVPLVNIVADTIIPREKLPMRYVAYTPCFRSEAGSSGRDTRGMIRLHQFGKVELVSITTPEESKNEHEYITNASETILQKLNLPYRVMLLCTGDMGFAAKKTYDIEVWLPGQKQYREIASCSNCGDFQARRMKARYKEFGSNETTLVHTLNASGLPIGRTMVAILENYQNEDGSITIPDVLINYMGGLQKITAYSE</sequence>
<evidence type="ECO:0000255" key="1">
    <source>
        <dbReference type="HAMAP-Rule" id="MF_00176"/>
    </source>
</evidence>
<keyword id="KW-0030">Aminoacyl-tRNA synthetase</keyword>
<keyword id="KW-0067">ATP-binding</keyword>
<keyword id="KW-0963">Cytoplasm</keyword>
<keyword id="KW-0436">Ligase</keyword>
<keyword id="KW-0547">Nucleotide-binding</keyword>
<keyword id="KW-0648">Protein biosynthesis</keyword>
<accession>A8F2S3</accession>
<feature type="chain" id="PRO_1000058356" description="Serine--tRNA ligase">
    <location>
        <begin position="1"/>
        <end position="425"/>
    </location>
</feature>
<feature type="binding site" evidence="1">
    <location>
        <begin position="228"/>
        <end position="230"/>
    </location>
    <ligand>
        <name>L-serine</name>
        <dbReference type="ChEBI" id="CHEBI:33384"/>
    </ligand>
</feature>
<feature type="binding site" evidence="1">
    <location>
        <begin position="259"/>
        <end position="261"/>
    </location>
    <ligand>
        <name>ATP</name>
        <dbReference type="ChEBI" id="CHEBI:30616"/>
    </ligand>
</feature>
<feature type="binding site" evidence="1">
    <location>
        <position position="282"/>
    </location>
    <ligand>
        <name>L-serine</name>
        <dbReference type="ChEBI" id="CHEBI:33384"/>
    </ligand>
</feature>
<feature type="binding site" evidence="1">
    <location>
        <begin position="346"/>
        <end position="349"/>
    </location>
    <ligand>
        <name>ATP</name>
        <dbReference type="ChEBI" id="CHEBI:30616"/>
    </ligand>
</feature>
<feature type="binding site" evidence="1">
    <location>
        <position position="382"/>
    </location>
    <ligand>
        <name>L-serine</name>
        <dbReference type="ChEBI" id="CHEBI:33384"/>
    </ligand>
</feature>
<proteinExistence type="inferred from homology"/>
<organism>
    <name type="scientific">Rickettsia massiliae (strain Mtu5)</name>
    <dbReference type="NCBI Taxonomy" id="416276"/>
    <lineage>
        <taxon>Bacteria</taxon>
        <taxon>Pseudomonadati</taxon>
        <taxon>Pseudomonadota</taxon>
        <taxon>Alphaproteobacteria</taxon>
        <taxon>Rickettsiales</taxon>
        <taxon>Rickettsiaceae</taxon>
        <taxon>Rickettsieae</taxon>
        <taxon>Rickettsia</taxon>
        <taxon>spotted fever group</taxon>
    </lineage>
</organism>